<proteinExistence type="inferred from homology"/>
<comment type="function">
    <text evidence="1">Converts seryl-tRNA(Sec) to selenocysteinyl-tRNA(Sec) required for selenoprotein biosynthesis.</text>
</comment>
<comment type="catalytic activity">
    <reaction evidence="1">
        <text>L-seryl-tRNA(Sec) + selenophosphate + H(+) = L-selenocysteinyl-tRNA(Sec) + phosphate</text>
        <dbReference type="Rhea" id="RHEA:22728"/>
        <dbReference type="Rhea" id="RHEA-COMP:9742"/>
        <dbReference type="Rhea" id="RHEA-COMP:9743"/>
        <dbReference type="ChEBI" id="CHEBI:15378"/>
        <dbReference type="ChEBI" id="CHEBI:16144"/>
        <dbReference type="ChEBI" id="CHEBI:43474"/>
        <dbReference type="ChEBI" id="CHEBI:78533"/>
        <dbReference type="ChEBI" id="CHEBI:78573"/>
        <dbReference type="EC" id="2.9.1.1"/>
    </reaction>
</comment>
<comment type="cofactor">
    <cofactor evidence="1">
        <name>pyridoxal 5'-phosphate</name>
        <dbReference type="ChEBI" id="CHEBI:597326"/>
    </cofactor>
</comment>
<comment type="pathway">
    <text evidence="1">Aminoacyl-tRNA biosynthesis; selenocysteinyl-tRNA(Sec) biosynthesis; selenocysteinyl-tRNA(Sec) from L-seryl-tRNA(Sec) (bacterial route): step 1/1.</text>
</comment>
<comment type="subcellular location">
    <subcellularLocation>
        <location evidence="1">Cytoplasm</location>
    </subcellularLocation>
</comment>
<comment type="similarity">
    <text evidence="1">Belongs to the SelA family.</text>
</comment>
<gene>
    <name evidence="1" type="primary">selA</name>
    <name type="ordered locus">RA0005</name>
    <name type="ORF">SMa0011</name>
</gene>
<geneLocation type="plasmid">
    <name>pSymA</name>
    <name>megaplasmid 1</name>
</geneLocation>
<reference key="1">
    <citation type="journal article" date="2001" name="Proc. Natl. Acad. Sci. U.S.A.">
        <title>Nucleotide sequence and predicted functions of the entire Sinorhizobium meliloti pSymA megaplasmid.</title>
        <authorList>
            <person name="Barnett M.J."/>
            <person name="Fisher R.F."/>
            <person name="Jones T."/>
            <person name="Komp C."/>
            <person name="Abola A.P."/>
            <person name="Barloy-Hubler F."/>
            <person name="Bowser L."/>
            <person name="Capela D."/>
            <person name="Galibert F."/>
            <person name="Gouzy J."/>
            <person name="Gurjal M."/>
            <person name="Hong A."/>
            <person name="Huizar L."/>
            <person name="Hyman R.W."/>
            <person name="Kahn D."/>
            <person name="Kahn M.L."/>
            <person name="Kalman S."/>
            <person name="Keating D.H."/>
            <person name="Palm C."/>
            <person name="Peck M.C."/>
            <person name="Surzycki R."/>
            <person name="Wells D.H."/>
            <person name="Yeh K.-C."/>
            <person name="Davis R.W."/>
            <person name="Federspiel N.A."/>
            <person name="Long S.R."/>
        </authorList>
    </citation>
    <scope>NUCLEOTIDE SEQUENCE [LARGE SCALE GENOMIC DNA]</scope>
    <source>
        <strain>1021</strain>
    </source>
</reference>
<reference key="2">
    <citation type="journal article" date="2001" name="Science">
        <title>The composite genome of the legume symbiont Sinorhizobium meliloti.</title>
        <authorList>
            <person name="Galibert F."/>
            <person name="Finan T.M."/>
            <person name="Long S.R."/>
            <person name="Puehler A."/>
            <person name="Abola P."/>
            <person name="Ampe F."/>
            <person name="Barloy-Hubler F."/>
            <person name="Barnett M.J."/>
            <person name="Becker A."/>
            <person name="Boistard P."/>
            <person name="Bothe G."/>
            <person name="Boutry M."/>
            <person name="Bowser L."/>
            <person name="Buhrmester J."/>
            <person name="Cadieu E."/>
            <person name="Capela D."/>
            <person name="Chain P."/>
            <person name="Cowie A."/>
            <person name="Davis R.W."/>
            <person name="Dreano S."/>
            <person name="Federspiel N.A."/>
            <person name="Fisher R.F."/>
            <person name="Gloux S."/>
            <person name="Godrie T."/>
            <person name="Goffeau A."/>
            <person name="Golding B."/>
            <person name="Gouzy J."/>
            <person name="Gurjal M."/>
            <person name="Hernandez-Lucas I."/>
            <person name="Hong A."/>
            <person name="Huizar L."/>
            <person name="Hyman R.W."/>
            <person name="Jones T."/>
            <person name="Kahn D."/>
            <person name="Kahn M.L."/>
            <person name="Kalman S."/>
            <person name="Keating D.H."/>
            <person name="Kiss E."/>
            <person name="Komp C."/>
            <person name="Lelaure V."/>
            <person name="Masuy D."/>
            <person name="Palm C."/>
            <person name="Peck M.C."/>
            <person name="Pohl T.M."/>
            <person name="Portetelle D."/>
            <person name="Purnelle B."/>
            <person name="Ramsperger U."/>
            <person name="Surzycki R."/>
            <person name="Thebault P."/>
            <person name="Vandenbol M."/>
            <person name="Vorhoelter F.J."/>
            <person name="Weidner S."/>
            <person name="Wells D.H."/>
            <person name="Wong K."/>
            <person name="Yeh K.-C."/>
            <person name="Batut J."/>
        </authorList>
    </citation>
    <scope>NUCLEOTIDE SEQUENCE [LARGE SCALE GENOMIC DNA]</scope>
    <source>
        <strain>1021</strain>
    </source>
</reference>
<evidence type="ECO:0000255" key="1">
    <source>
        <dbReference type="HAMAP-Rule" id="MF_00423"/>
    </source>
</evidence>
<organism>
    <name type="scientific">Rhizobium meliloti (strain 1021)</name>
    <name type="common">Ensifer meliloti</name>
    <name type="synonym">Sinorhizobium meliloti</name>
    <dbReference type="NCBI Taxonomy" id="266834"/>
    <lineage>
        <taxon>Bacteria</taxon>
        <taxon>Pseudomonadati</taxon>
        <taxon>Pseudomonadota</taxon>
        <taxon>Alphaproteobacteria</taxon>
        <taxon>Hyphomicrobiales</taxon>
        <taxon>Rhizobiaceae</taxon>
        <taxon>Sinorhizobium/Ensifer group</taxon>
        <taxon>Sinorhizobium</taxon>
    </lineage>
</organism>
<name>SELA_RHIME</name>
<protein>
    <recommendedName>
        <fullName evidence="1">L-seryl-tRNA(Sec) selenium transferase</fullName>
        <ecNumber evidence="1">2.9.1.1</ecNumber>
    </recommendedName>
    <alternativeName>
        <fullName evidence="1">Selenocysteine synthase</fullName>
        <shortName evidence="1">Sec synthase</shortName>
    </alternativeName>
    <alternativeName>
        <fullName evidence="1">Selenocysteinyl-tRNA(Sec) synthase</fullName>
    </alternativeName>
</protein>
<keyword id="KW-0963">Cytoplasm</keyword>
<keyword id="KW-0614">Plasmid</keyword>
<keyword id="KW-0648">Protein biosynthesis</keyword>
<keyword id="KW-0663">Pyridoxal phosphate</keyword>
<keyword id="KW-1185">Reference proteome</keyword>
<keyword id="KW-0711">Selenium</keyword>
<keyword id="KW-0808">Transferase</keyword>
<feature type="chain" id="PRO_0000189614" description="L-seryl-tRNA(Sec) selenium transferase">
    <location>
        <begin position="1"/>
        <end position="466"/>
    </location>
</feature>
<feature type="modified residue" description="N6-(pyridoxal phosphate)lysine" evidence="1">
    <location>
        <position position="292"/>
    </location>
</feature>
<accession>P58226</accession>
<dbReference type="EC" id="2.9.1.1" evidence="1"/>
<dbReference type="EMBL" id="AE006469">
    <property type="protein sequence ID" value="AAK64663.1"/>
    <property type="molecule type" value="Genomic_DNA"/>
</dbReference>
<dbReference type="PIR" id="E95262">
    <property type="entry name" value="E95262"/>
</dbReference>
<dbReference type="RefSeq" id="NP_435251.1">
    <property type="nucleotide sequence ID" value="NC_003037.1"/>
</dbReference>
<dbReference type="RefSeq" id="WP_010967004.1">
    <property type="nucleotide sequence ID" value="NC_003037.1"/>
</dbReference>
<dbReference type="SMR" id="P58226"/>
<dbReference type="EnsemblBacteria" id="AAK64663">
    <property type="protein sequence ID" value="AAK64663"/>
    <property type="gene ID" value="SMa0011"/>
</dbReference>
<dbReference type="KEGG" id="sme:SMa0011"/>
<dbReference type="PATRIC" id="fig|266834.11.peg.5"/>
<dbReference type="HOGENOM" id="CLU_038142_1_0_5"/>
<dbReference type="OrthoDB" id="9787096at2"/>
<dbReference type="UniPathway" id="UPA00906">
    <property type="reaction ID" value="UER00896"/>
</dbReference>
<dbReference type="Proteomes" id="UP000001976">
    <property type="component" value="Plasmid pSymA"/>
</dbReference>
<dbReference type="GO" id="GO:0005737">
    <property type="term" value="C:cytoplasm"/>
    <property type="evidence" value="ECO:0007669"/>
    <property type="project" value="UniProtKB-SubCell"/>
</dbReference>
<dbReference type="GO" id="GO:0004125">
    <property type="term" value="F:L-seryl-tRNA(Sec) selenium transferase activity"/>
    <property type="evidence" value="ECO:0007669"/>
    <property type="project" value="UniProtKB-UniRule"/>
</dbReference>
<dbReference type="GO" id="GO:0001717">
    <property type="term" value="P:conversion of seryl-tRNAsec to selenocys-tRNAsec"/>
    <property type="evidence" value="ECO:0007669"/>
    <property type="project" value="UniProtKB-UniRule"/>
</dbReference>
<dbReference type="GO" id="GO:0001514">
    <property type="term" value="P:selenocysteine incorporation"/>
    <property type="evidence" value="ECO:0007669"/>
    <property type="project" value="UniProtKB-UniRule"/>
</dbReference>
<dbReference type="Gene3D" id="3.90.1150.180">
    <property type="match status" value="1"/>
</dbReference>
<dbReference type="Gene3D" id="3.40.640.10">
    <property type="entry name" value="Type I PLP-dependent aspartate aminotransferase-like (Major domain)"/>
    <property type="match status" value="1"/>
</dbReference>
<dbReference type="HAMAP" id="MF_00423">
    <property type="entry name" value="SelA"/>
    <property type="match status" value="1"/>
</dbReference>
<dbReference type="InterPro" id="IPR015424">
    <property type="entry name" value="PyrdxlP-dep_Trfase"/>
</dbReference>
<dbReference type="InterPro" id="IPR015421">
    <property type="entry name" value="PyrdxlP-dep_Trfase_major"/>
</dbReference>
<dbReference type="InterPro" id="IPR018319">
    <property type="entry name" value="SelA-like"/>
</dbReference>
<dbReference type="InterPro" id="IPR004534">
    <property type="entry name" value="SelA_trans"/>
</dbReference>
<dbReference type="InterPro" id="IPR025862">
    <property type="entry name" value="SelA_trans_N_dom"/>
</dbReference>
<dbReference type="NCBIfam" id="TIGR00474">
    <property type="entry name" value="selA"/>
    <property type="match status" value="1"/>
</dbReference>
<dbReference type="PANTHER" id="PTHR32328">
    <property type="entry name" value="L-SERYL-TRNA(SEC) SELENIUM TRANSFERASE"/>
    <property type="match status" value="1"/>
</dbReference>
<dbReference type="PANTHER" id="PTHR32328:SF0">
    <property type="entry name" value="L-SERYL-TRNA(SEC) SELENIUM TRANSFERASE"/>
    <property type="match status" value="1"/>
</dbReference>
<dbReference type="Pfam" id="PF12390">
    <property type="entry name" value="Se-cys_synth_N"/>
    <property type="match status" value="1"/>
</dbReference>
<dbReference type="Pfam" id="PF03841">
    <property type="entry name" value="SelA"/>
    <property type="match status" value="1"/>
</dbReference>
<dbReference type="SUPFAM" id="SSF53383">
    <property type="entry name" value="PLP-dependent transferases"/>
    <property type="match status" value="1"/>
</dbReference>
<sequence length="466" mass="49028">MSGPVDLRALPSVDQMLNAAAVSPLVEQHGRAVVTDELRKVLGEVRLAVRSGGALPGKDGIVAALLSRLDDRSRSNLRPLFNLTGTVLHTNLGRALLAQEAVDAAVDAMREAAALEFDLDSGGRGERDSHLRELLCELTGAEDATVVNNNAAAVLIALNSVGAGRQAIVSRGELIEIGGAFRMPDIMERAGVDLVEVGTTNRTHAKDYVKAIGPETALILKVHTSNYRIEGFTAEVPGAELAAIAHERGVVLLNDLGSGSLVDLSRYGLGREPTVREAVAEGADLVTFSGDKLLGGPQAGFIVGRRDLIAEINRNPLKRALRVDKIRIAATAATLKLYRDPDRLASRLPTLFMLSRVQAEVRAQAERLAPQVGAMLAPSGYAVEVCSCSSQIGSGALPVDTIPSAGLRIVGSSGSALEALAALFRSLSRPILGRLRDGALVLDLRCLSDEAEFLKTLSEGSGDAVA</sequence>